<gene>
    <name evidence="1" type="primary">dxr</name>
    <name type="ordered locus">BMA10229_A3261</name>
</gene>
<comment type="function">
    <text evidence="1">Catalyzes the NADPH-dependent rearrangement and reduction of 1-deoxy-D-xylulose-5-phosphate (DXP) to 2-C-methyl-D-erythritol 4-phosphate (MEP).</text>
</comment>
<comment type="catalytic activity">
    <reaction evidence="1">
        <text>2-C-methyl-D-erythritol 4-phosphate + NADP(+) = 1-deoxy-D-xylulose 5-phosphate + NADPH + H(+)</text>
        <dbReference type="Rhea" id="RHEA:13717"/>
        <dbReference type="ChEBI" id="CHEBI:15378"/>
        <dbReference type="ChEBI" id="CHEBI:57783"/>
        <dbReference type="ChEBI" id="CHEBI:57792"/>
        <dbReference type="ChEBI" id="CHEBI:58262"/>
        <dbReference type="ChEBI" id="CHEBI:58349"/>
        <dbReference type="EC" id="1.1.1.267"/>
    </reaction>
    <physiologicalReaction direction="right-to-left" evidence="1">
        <dbReference type="Rhea" id="RHEA:13719"/>
    </physiologicalReaction>
</comment>
<comment type="cofactor">
    <cofactor evidence="1">
        <name>Mg(2+)</name>
        <dbReference type="ChEBI" id="CHEBI:18420"/>
    </cofactor>
    <cofactor evidence="1">
        <name>Mn(2+)</name>
        <dbReference type="ChEBI" id="CHEBI:29035"/>
    </cofactor>
</comment>
<comment type="pathway">
    <text evidence="1">Isoprenoid biosynthesis; isopentenyl diphosphate biosynthesis via DXP pathway; isopentenyl diphosphate from 1-deoxy-D-xylulose 5-phosphate: step 1/6.</text>
</comment>
<comment type="similarity">
    <text evidence="1">Belongs to the DXR family.</text>
</comment>
<sequence>MQKRLTLLGSTGSIGDSTLDVVARHPERFAVHALTAHRNGEKLVAQCLRFAPDVAVVGDAETAARVEAQLRAAGSRTQVAYGKQALVDVSKSDGCDTVVAAIVGAAGLAPSLAAARAGKRILLANKEALVMSGAIFMDAVRDHGAILLPVDSEHNAIFQCMPRDAAEHGGIAKIIVTASGGPFRTREPATLASVTPDEACKHPNWVMGRKISVDSATMMNKGLEVIEAHWLFGLPSEHIDVLIHPQSVIHSLVSYRDGSVLAQLGNPDMRTPIAHALAFPERVDAGVAQLDLAQIATLTFEKPDYARFPCLALAIDALEAGGVASAALNAANEIAVDAFLSRRIRFTAIAQTVGAVLDGLSNRTPGGLDDVIEADAAARRAATAFIGKLPAPGVERAA</sequence>
<name>DXR_BURM9</name>
<evidence type="ECO:0000255" key="1">
    <source>
        <dbReference type="HAMAP-Rule" id="MF_00183"/>
    </source>
</evidence>
<accession>A2SB78</accession>
<protein>
    <recommendedName>
        <fullName evidence="1">1-deoxy-D-xylulose 5-phosphate reductoisomerase</fullName>
        <shortName evidence="1">DXP reductoisomerase</shortName>
        <ecNumber evidence="1">1.1.1.267</ecNumber>
    </recommendedName>
    <alternativeName>
        <fullName evidence="1">1-deoxyxylulose-5-phosphate reductoisomerase</fullName>
    </alternativeName>
    <alternativeName>
        <fullName evidence="1">2-C-methyl-D-erythritol 4-phosphate synthase</fullName>
    </alternativeName>
</protein>
<reference key="1">
    <citation type="journal article" date="2010" name="Genome Biol. Evol.">
        <title>Continuing evolution of Burkholderia mallei through genome reduction and large-scale rearrangements.</title>
        <authorList>
            <person name="Losada L."/>
            <person name="Ronning C.M."/>
            <person name="DeShazer D."/>
            <person name="Woods D."/>
            <person name="Fedorova N."/>
            <person name="Kim H.S."/>
            <person name="Shabalina S.A."/>
            <person name="Pearson T.R."/>
            <person name="Brinkac L."/>
            <person name="Tan P."/>
            <person name="Nandi T."/>
            <person name="Crabtree J."/>
            <person name="Badger J."/>
            <person name="Beckstrom-Sternberg S."/>
            <person name="Saqib M."/>
            <person name="Schutzer S.E."/>
            <person name="Keim P."/>
            <person name="Nierman W.C."/>
        </authorList>
    </citation>
    <scope>NUCLEOTIDE SEQUENCE [LARGE SCALE GENOMIC DNA]</scope>
    <source>
        <strain>NCTC 10229</strain>
    </source>
</reference>
<dbReference type="EC" id="1.1.1.267" evidence="1"/>
<dbReference type="EMBL" id="CP000546">
    <property type="protein sequence ID" value="ABN03493.1"/>
    <property type="molecule type" value="Genomic_DNA"/>
</dbReference>
<dbReference type="RefSeq" id="WP_004193915.1">
    <property type="nucleotide sequence ID" value="NC_008836.1"/>
</dbReference>
<dbReference type="SMR" id="A2SB78"/>
<dbReference type="KEGG" id="bml:BMA10229_A3261"/>
<dbReference type="HOGENOM" id="CLU_035714_4_0_4"/>
<dbReference type="UniPathway" id="UPA00056">
    <property type="reaction ID" value="UER00092"/>
</dbReference>
<dbReference type="Proteomes" id="UP000002283">
    <property type="component" value="Chromosome I"/>
</dbReference>
<dbReference type="GO" id="GO:0030604">
    <property type="term" value="F:1-deoxy-D-xylulose-5-phosphate reductoisomerase activity"/>
    <property type="evidence" value="ECO:0007669"/>
    <property type="project" value="UniProtKB-UniRule"/>
</dbReference>
<dbReference type="GO" id="GO:0030145">
    <property type="term" value="F:manganese ion binding"/>
    <property type="evidence" value="ECO:0007669"/>
    <property type="project" value="TreeGrafter"/>
</dbReference>
<dbReference type="GO" id="GO:0070402">
    <property type="term" value="F:NADPH binding"/>
    <property type="evidence" value="ECO:0007669"/>
    <property type="project" value="InterPro"/>
</dbReference>
<dbReference type="GO" id="GO:0051484">
    <property type="term" value="P:isopentenyl diphosphate biosynthetic process, methylerythritol 4-phosphate pathway involved in terpenoid biosynthetic process"/>
    <property type="evidence" value="ECO:0007669"/>
    <property type="project" value="TreeGrafter"/>
</dbReference>
<dbReference type="FunFam" id="1.10.1740.10:FF:000004">
    <property type="entry name" value="1-deoxy-D-xylulose 5-phosphate reductoisomerase"/>
    <property type="match status" value="1"/>
</dbReference>
<dbReference type="FunFam" id="3.40.50.720:FF:000045">
    <property type="entry name" value="1-deoxy-D-xylulose 5-phosphate reductoisomerase"/>
    <property type="match status" value="1"/>
</dbReference>
<dbReference type="Gene3D" id="1.10.1740.10">
    <property type="match status" value="1"/>
</dbReference>
<dbReference type="Gene3D" id="3.40.50.720">
    <property type="entry name" value="NAD(P)-binding Rossmann-like Domain"/>
    <property type="match status" value="1"/>
</dbReference>
<dbReference type="HAMAP" id="MF_00183">
    <property type="entry name" value="DXP_reductoisom"/>
    <property type="match status" value="1"/>
</dbReference>
<dbReference type="InterPro" id="IPR003821">
    <property type="entry name" value="DXP_reductoisomerase"/>
</dbReference>
<dbReference type="InterPro" id="IPR013644">
    <property type="entry name" value="DXP_reductoisomerase_C"/>
</dbReference>
<dbReference type="InterPro" id="IPR013512">
    <property type="entry name" value="DXP_reductoisomerase_N"/>
</dbReference>
<dbReference type="InterPro" id="IPR026877">
    <property type="entry name" value="DXPR_C"/>
</dbReference>
<dbReference type="InterPro" id="IPR036169">
    <property type="entry name" value="DXPR_C_sf"/>
</dbReference>
<dbReference type="InterPro" id="IPR036291">
    <property type="entry name" value="NAD(P)-bd_dom_sf"/>
</dbReference>
<dbReference type="NCBIfam" id="TIGR00243">
    <property type="entry name" value="Dxr"/>
    <property type="match status" value="1"/>
</dbReference>
<dbReference type="NCBIfam" id="NF003938">
    <property type="entry name" value="PRK05447.1-1"/>
    <property type="match status" value="1"/>
</dbReference>
<dbReference type="NCBIfam" id="NF009114">
    <property type="entry name" value="PRK12464.1"/>
    <property type="match status" value="1"/>
</dbReference>
<dbReference type="PANTHER" id="PTHR30525">
    <property type="entry name" value="1-DEOXY-D-XYLULOSE 5-PHOSPHATE REDUCTOISOMERASE"/>
    <property type="match status" value="1"/>
</dbReference>
<dbReference type="PANTHER" id="PTHR30525:SF0">
    <property type="entry name" value="1-DEOXY-D-XYLULOSE 5-PHOSPHATE REDUCTOISOMERASE, CHLOROPLASTIC"/>
    <property type="match status" value="1"/>
</dbReference>
<dbReference type="Pfam" id="PF08436">
    <property type="entry name" value="DXP_redisom_C"/>
    <property type="match status" value="1"/>
</dbReference>
<dbReference type="Pfam" id="PF02670">
    <property type="entry name" value="DXP_reductoisom"/>
    <property type="match status" value="1"/>
</dbReference>
<dbReference type="Pfam" id="PF13288">
    <property type="entry name" value="DXPR_C"/>
    <property type="match status" value="1"/>
</dbReference>
<dbReference type="PIRSF" id="PIRSF006205">
    <property type="entry name" value="Dxp_reductismrs"/>
    <property type="match status" value="1"/>
</dbReference>
<dbReference type="SUPFAM" id="SSF69055">
    <property type="entry name" value="1-deoxy-D-xylulose-5-phosphate reductoisomerase, C-terminal domain"/>
    <property type="match status" value="1"/>
</dbReference>
<dbReference type="SUPFAM" id="SSF55347">
    <property type="entry name" value="Glyceraldehyde-3-phosphate dehydrogenase-like, C-terminal domain"/>
    <property type="match status" value="1"/>
</dbReference>
<dbReference type="SUPFAM" id="SSF51735">
    <property type="entry name" value="NAD(P)-binding Rossmann-fold domains"/>
    <property type="match status" value="1"/>
</dbReference>
<keyword id="KW-0414">Isoprene biosynthesis</keyword>
<keyword id="KW-0464">Manganese</keyword>
<keyword id="KW-0479">Metal-binding</keyword>
<keyword id="KW-0521">NADP</keyword>
<keyword id="KW-0560">Oxidoreductase</keyword>
<proteinExistence type="inferred from homology"/>
<feature type="chain" id="PRO_1000020227" description="1-deoxy-D-xylulose 5-phosphate reductoisomerase">
    <location>
        <begin position="1"/>
        <end position="398"/>
    </location>
</feature>
<feature type="binding site" evidence="1">
    <location>
        <position position="11"/>
    </location>
    <ligand>
        <name>NADPH</name>
        <dbReference type="ChEBI" id="CHEBI:57783"/>
    </ligand>
</feature>
<feature type="binding site" evidence="1">
    <location>
        <position position="12"/>
    </location>
    <ligand>
        <name>NADPH</name>
        <dbReference type="ChEBI" id="CHEBI:57783"/>
    </ligand>
</feature>
<feature type="binding site" evidence="1">
    <location>
        <position position="13"/>
    </location>
    <ligand>
        <name>NADPH</name>
        <dbReference type="ChEBI" id="CHEBI:57783"/>
    </ligand>
</feature>
<feature type="binding site" evidence="1">
    <location>
        <position position="14"/>
    </location>
    <ligand>
        <name>NADPH</name>
        <dbReference type="ChEBI" id="CHEBI:57783"/>
    </ligand>
</feature>
<feature type="binding site" evidence="1">
    <location>
        <position position="38"/>
    </location>
    <ligand>
        <name>NADPH</name>
        <dbReference type="ChEBI" id="CHEBI:57783"/>
    </ligand>
</feature>
<feature type="binding site" evidence="1">
    <location>
        <position position="39"/>
    </location>
    <ligand>
        <name>NADPH</name>
        <dbReference type="ChEBI" id="CHEBI:57783"/>
    </ligand>
</feature>
<feature type="binding site" evidence="1">
    <location>
        <position position="125"/>
    </location>
    <ligand>
        <name>NADPH</name>
        <dbReference type="ChEBI" id="CHEBI:57783"/>
    </ligand>
</feature>
<feature type="binding site" evidence="1">
    <location>
        <position position="126"/>
    </location>
    <ligand>
        <name>1-deoxy-D-xylulose 5-phosphate</name>
        <dbReference type="ChEBI" id="CHEBI:57792"/>
    </ligand>
</feature>
<feature type="binding site" evidence="1">
    <location>
        <position position="127"/>
    </location>
    <ligand>
        <name>NADPH</name>
        <dbReference type="ChEBI" id="CHEBI:57783"/>
    </ligand>
</feature>
<feature type="binding site" evidence="1">
    <location>
        <position position="151"/>
    </location>
    <ligand>
        <name>Mn(2+)</name>
        <dbReference type="ChEBI" id="CHEBI:29035"/>
    </ligand>
</feature>
<feature type="binding site" evidence="1">
    <location>
        <position position="152"/>
    </location>
    <ligand>
        <name>1-deoxy-D-xylulose 5-phosphate</name>
        <dbReference type="ChEBI" id="CHEBI:57792"/>
    </ligand>
</feature>
<feature type="binding site" evidence="1">
    <location>
        <position position="153"/>
    </location>
    <ligand>
        <name>1-deoxy-D-xylulose 5-phosphate</name>
        <dbReference type="ChEBI" id="CHEBI:57792"/>
    </ligand>
</feature>
<feature type="binding site" evidence="1">
    <location>
        <position position="153"/>
    </location>
    <ligand>
        <name>Mn(2+)</name>
        <dbReference type="ChEBI" id="CHEBI:29035"/>
    </ligand>
</feature>
<feature type="binding site" evidence="1">
    <location>
        <position position="179"/>
    </location>
    <ligand>
        <name>1-deoxy-D-xylulose 5-phosphate</name>
        <dbReference type="ChEBI" id="CHEBI:57792"/>
    </ligand>
</feature>
<feature type="binding site" evidence="1">
    <location>
        <position position="202"/>
    </location>
    <ligand>
        <name>1-deoxy-D-xylulose 5-phosphate</name>
        <dbReference type="ChEBI" id="CHEBI:57792"/>
    </ligand>
</feature>
<feature type="binding site" evidence="1">
    <location>
        <position position="208"/>
    </location>
    <ligand>
        <name>NADPH</name>
        <dbReference type="ChEBI" id="CHEBI:57783"/>
    </ligand>
</feature>
<feature type="binding site" evidence="1">
    <location>
        <position position="215"/>
    </location>
    <ligand>
        <name>1-deoxy-D-xylulose 5-phosphate</name>
        <dbReference type="ChEBI" id="CHEBI:57792"/>
    </ligand>
</feature>
<feature type="binding site" evidence="1">
    <location>
        <position position="220"/>
    </location>
    <ligand>
        <name>1-deoxy-D-xylulose 5-phosphate</name>
        <dbReference type="ChEBI" id="CHEBI:57792"/>
    </ligand>
</feature>
<feature type="binding site" evidence="1">
    <location>
        <position position="221"/>
    </location>
    <ligand>
        <name>1-deoxy-D-xylulose 5-phosphate</name>
        <dbReference type="ChEBI" id="CHEBI:57792"/>
    </ligand>
</feature>
<feature type="binding site" evidence="1">
    <location>
        <position position="224"/>
    </location>
    <ligand>
        <name>1-deoxy-D-xylulose 5-phosphate</name>
        <dbReference type="ChEBI" id="CHEBI:57792"/>
    </ligand>
</feature>
<feature type="binding site" evidence="1">
    <location>
        <position position="224"/>
    </location>
    <ligand>
        <name>Mn(2+)</name>
        <dbReference type="ChEBI" id="CHEBI:29035"/>
    </ligand>
</feature>
<organism>
    <name type="scientific">Burkholderia mallei (strain NCTC 10229)</name>
    <dbReference type="NCBI Taxonomy" id="412022"/>
    <lineage>
        <taxon>Bacteria</taxon>
        <taxon>Pseudomonadati</taxon>
        <taxon>Pseudomonadota</taxon>
        <taxon>Betaproteobacteria</taxon>
        <taxon>Burkholderiales</taxon>
        <taxon>Burkholderiaceae</taxon>
        <taxon>Burkholderia</taxon>
        <taxon>pseudomallei group</taxon>
    </lineage>
</organism>